<dbReference type="EMBL" id="L49337">
    <property type="protein sequence ID" value="AAB81419.2"/>
    <property type="molecule type" value="Genomic_DNA"/>
</dbReference>
<dbReference type="EMBL" id="U12312">
    <property type="protein sequence ID" value="AAA67717.1"/>
    <property type="molecule type" value="Genomic_DNA"/>
</dbReference>
<dbReference type="EMBL" id="AL591688">
    <property type="protein sequence ID" value="CAC45240.1"/>
    <property type="molecule type" value="Genomic_DNA"/>
</dbReference>
<dbReference type="EMBL" id="M24526">
    <property type="status" value="NOT_ANNOTATED_CDS"/>
    <property type="molecule type" value="Genomic_DNA"/>
</dbReference>
<dbReference type="RefSeq" id="NP_384774.1">
    <property type="nucleotide sequence ID" value="NC_003047.1"/>
</dbReference>
<dbReference type="RefSeq" id="WP_010968735.1">
    <property type="nucleotide sequence ID" value="NC_003047.1"/>
</dbReference>
<dbReference type="SMR" id="P37827"/>
<dbReference type="EnsemblBacteria" id="CAC45240">
    <property type="protein sequence ID" value="CAC45240"/>
    <property type="gene ID" value="SMc03036"/>
</dbReference>
<dbReference type="KEGG" id="sme:SMc03036"/>
<dbReference type="PATRIC" id="fig|266834.11.peg.2042"/>
<dbReference type="eggNOG" id="COG1338">
    <property type="taxonomic scope" value="Bacteria"/>
</dbReference>
<dbReference type="HOGENOM" id="CLU_042028_0_0_5"/>
<dbReference type="OrthoDB" id="9805111at2"/>
<dbReference type="Proteomes" id="UP000001976">
    <property type="component" value="Chromosome"/>
</dbReference>
<dbReference type="GO" id="GO:0009425">
    <property type="term" value="C:bacterial-type flagellum basal body"/>
    <property type="evidence" value="ECO:0007669"/>
    <property type="project" value="UniProtKB-SubCell"/>
</dbReference>
<dbReference type="GO" id="GO:0005886">
    <property type="term" value="C:plasma membrane"/>
    <property type="evidence" value="ECO:0007669"/>
    <property type="project" value="UniProtKB-SubCell"/>
</dbReference>
<dbReference type="GO" id="GO:0044781">
    <property type="term" value="P:bacterial-type flagellum organization"/>
    <property type="evidence" value="ECO:0007669"/>
    <property type="project" value="UniProtKB-KW"/>
</dbReference>
<dbReference type="GO" id="GO:0009306">
    <property type="term" value="P:protein secretion"/>
    <property type="evidence" value="ECO:0007669"/>
    <property type="project" value="InterPro"/>
</dbReference>
<dbReference type="InterPro" id="IPR005837">
    <property type="entry name" value="FliP"/>
</dbReference>
<dbReference type="InterPro" id="IPR005838">
    <property type="entry name" value="T3SS_IM_P"/>
</dbReference>
<dbReference type="NCBIfam" id="TIGR01103">
    <property type="entry name" value="fliP"/>
    <property type="match status" value="1"/>
</dbReference>
<dbReference type="NCBIfam" id="NF009438">
    <property type="entry name" value="PRK12797.1"/>
    <property type="match status" value="1"/>
</dbReference>
<dbReference type="PANTHER" id="PTHR30587">
    <property type="entry name" value="FLAGELLAR BIOSYNTHETIC PROTEIN FLIP"/>
    <property type="match status" value="1"/>
</dbReference>
<dbReference type="PANTHER" id="PTHR30587:SF0">
    <property type="entry name" value="FLAGELLAR BIOSYNTHETIC PROTEIN FLIP"/>
    <property type="match status" value="1"/>
</dbReference>
<dbReference type="Pfam" id="PF00813">
    <property type="entry name" value="FliP"/>
    <property type="match status" value="1"/>
</dbReference>
<dbReference type="PRINTS" id="PR00951">
    <property type="entry name" value="FLGBIOSNFLIP"/>
</dbReference>
<dbReference type="PRINTS" id="PR01302">
    <property type="entry name" value="TYPE3IMPPROT"/>
</dbReference>
<dbReference type="PROSITE" id="PS01060">
    <property type="entry name" value="FLIP_1"/>
    <property type="match status" value="1"/>
</dbReference>
<dbReference type="PROSITE" id="PS01061">
    <property type="entry name" value="FLIP_2"/>
    <property type="match status" value="1"/>
</dbReference>
<gene>
    <name type="primary">fliP</name>
    <name type="ordered locus">R00668</name>
    <name type="ORF">SMc03036</name>
</gene>
<name>FLIP_RHIME</name>
<reference key="1">
    <citation type="submission" date="1996-03" db="EMBL/GenBank/DDBJ databases">
        <authorList>
            <person name="Platzer J."/>
            <person name="Schmitt R."/>
        </authorList>
    </citation>
    <scope>NUCLEOTIDE SEQUENCE [GENOMIC DNA]</scope>
    <source>
        <strain>RU11/001</strain>
    </source>
</reference>
<reference key="2">
    <citation type="submission" date="2001-01" db="EMBL/GenBank/DDBJ databases">
        <authorList>
            <person name="Schmitt R."/>
        </authorList>
    </citation>
    <scope>SEQUENCE REVISION TO 12-13; 27-37 AND 68-69</scope>
</reference>
<reference key="3">
    <citation type="journal article" date="1995" name="Gene">
        <title>Similarity between the Rhizobium meliloti fliP gene and pathogenicity-associated genes from animal and plant pathogens.</title>
        <authorList>
            <person name="Finan T.M."/>
            <person name="Gough C."/>
            <person name="Truchet G."/>
        </authorList>
    </citation>
    <scope>NUCLEOTIDE SEQUENCE [GENOMIC DNA]</scope>
    <source>
        <strain>RCR2011 / SU47</strain>
    </source>
</reference>
<reference key="4">
    <citation type="journal article" date="2001" name="Proc. Natl. Acad. Sci. U.S.A.">
        <title>Analysis of the chromosome sequence of the legume symbiont Sinorhizobium meliloti strain 1021.</title>
        <authorList>
            <person name="Capela D."/>
            <person name="Barloy-Hubler F."/>
            <person name="Gouzy J."/>
            <person name="Bothe G."/>
            <person name="Ampe F."/>
            <person name="Batut J."/>
            <person name="Boistard P."/>
            <person name="Becker A."/>
            <person name="Boutry M."/>
            <person name="Cadieu E."/>
            <person name="Dreano S."/>
            <person name="Gloux S."/>
            <person name="Godrie T."/>
            <person name="Goffeau A."/>
            <person name="Kahn D."/>
            <person name="Kiss E."/>
            <person name="Lelaure V."/>
            <person name="Masuy D."/>
            <person name="Pohl T."/>
            <person name="Portetelle D."/>
            <person name="Puehler A."/>
            <person name="Purnelle B."/>
            <person name="Ramsperger U."/>
            <person name="Renard C."/>
            <person name="Thebault P."/>
            <person name="Vandenbol M."/>
            <person name="Weidner S."/>
            <person name="Galibert F."/>
        </authorList>
    </citation>
    <scope>NUCLEOTIDE SEQUENCE [LARGE SCALE GENOMIC DNA]</scope>
    <source>
        <strain>1021</strain>
    </source>
</reference>
<reference key="5">
    <citation type="journal article" date="2001" name="Science">
        <title>The composite genome of the legume symbiont Sinorhizobium meliloti.</title>
        <authorList>
            <person name="Galibert F."/>
            <person name="Finan T.M."/>
            <person name="Long S.R."/>
            <person name="Puehler A."/>
            <person name="Abola P."/>
            <person name="Ampe F."/>
            <person name="Barloy-Hubler F."/>
            <person name="Barnett M.J."/>
            <person name="Becker A."/>
            <person name="Boistard P."/>
            <person name="Bothe G."/>
            <person name="Boutry M."/>
            <person name="Bowser L."/>
            <person name="Buhrmester J."/>
            <person name="Cadieu E."/>
            <person name="Capela D."/>
            <person name="Chain P."/>
            <person name="Cowie A."/>
            <person name="Davis R.W."/>
            <person name="Dreano S."/>
            <person name="Federspiel N.A."/>
            <person name="Fisher R.F."/>
            <person name="Gloux S."/>
            <person name="Godrie T."/>
            <person name="Goffeau A."/>
            <person name="Golding B."/>
            <person name="Gouzy J."/>
            <person name="Gurjal M."/>
            <person name="Hernandez-Lucas I."/>
            <person name="Hong A."/>
            <person name="Huizar L."/>
            <person name="Hyman R.W."/>
            <person name="Jones T."/>
            <person name="Kahn D."/>
            <person name="Kahn M.L."/>
            <person name="Kalman S."/>
            <person name="Keating D.H."/>
            <person name="Kiss E."/>
            <person name="Komp C."/>
            <person name="Lelaure V."/>
            <person name="Masuy D."/>
            <person name="Palm C."/>
            <person name="Peck M.C."/>
            <person name="Pohl T.M."/>
            <person name="Portetelle D."/>
            <person name="Purnelle B."/>
            <person name="Ramsperger U."/>
            <person name="Surzycki R."/>
            <person name="Thebault P."/>
            <person name="Vandenbol M."/>
            <person name="Vorhoelter F.J."/>
            <person name="Weidner S."/>
            <person name="Wells D.H."/>
            <person name="Wong K."/>
            <person name="Yeh K.-C."/>
            <person name="Batut J."/>
        </authorList>
    </citation>
    <scope>NUCLEOTIDE SEQUENCE [LARGE SCALE GENOMIC DNA]</scope>
    <source>
        <strain>1021</strain>
    </source>
</reference>
<reference key="6">
    <citation type="journal article" date="1989" name="J. Bacteriol.">
        <title>Identification and sequence analysis of two related flagellin genes in Rhizobium meliloti.</title>
        <authorList>
            <person name="Pleier E."/>
            <person name="Schmitt R."/>
        </authorList>
    </citation>
    <scope>NUCLEOTIDE SEQUENCE [GENOMIC DNA] OF 135-245</scope>
</reference>
<reference key="7">
    <citation type="journal article" date="1994" name="J. Bacteriol.">
        <title>Molecular characterization, nucleotide sequence, and expression of the fliO, fliP, fliQ, and fliR genes of Escherichia coli.</title>
        <authorList>
            <person name="Malakooti J."/>
            <person name="Ely B."/>
            <person name="Matsumura P."/>
        </authorList>
    </citation>
    <scope>IDENTIFICATION</scope>
</reference>
<feature type="chain" id="PRO_0000191987" description="Flagellar biosynthetic protein FliP">
    <location>
        <begin position="1"/>
        <end position="245"/>
    </location>
</feature>
<feature type="transmembrane region" description="Helical" evidence="2">
    <location>
        <begin position="4"/>
        <end position="24"/>
    </location>
</feature>
<feature type="transmembrane region" description="Helical" evidence="2">
    <location>
        <begin position="44"/>
        <end position="64"/>
    </location>
</feature>
<feature type="transmembrane region" description="Helical" evidence="2">
    <location>
        <begin position="84"/>
        <end position="104"/>
    </location>
</feature>
<feature type="transmembrane region" description="Helical" evidence="2">
    <location>
        <begin position="186"/>
        <end position="206"/>
    </location>
</feature>
<feature type="transmembrane region" description="Helical" evidence="2">
    <location>
        <begin position="210"/>
        <end position="230"/>
    </location>
</feature>
<feature type="sequence conflict" description="In Ref. 1; AAB81419." evidence="3" ref="1">
    <original>M</original>
    <variation>I</variation>
    <location>
        <position position="126"/>
    </location>
</feature>
<feature type="sequence conflict" description="In Ref. 1, 3 and 6." evidence="3" ref="1 3 6">
    <original>V</original>
    <variation>L</variation>
    <location>
        <position position="138"/>
    </location>
</feature>
<protein>
    <recommendedName>
        <fullName>Flagellar biosynthetic protein FliP</fullName>
    </recommendedName>
</protein>
<organism>
    <name type="scientific">Rhizobium meliloti (strain 1021)</name>
    <name type="common">Ensifer meliloti</name>
    <name type="synonym">Sinorhizobium meliloti</name>
    <dbReference type="NCBI Taxonomy" id="266834"/>
    <lineage>
        <taxon>Bacteria</taxon>
        <taxon>Pseudomonadati</taxon>
        <taxon>Pseudomonadota</taxon>
        <taxon>Alphaproteobacteria</taxon>
        <taxon>Hyphomicrobiales</taxon>
        <taxon>Rhizobiaceae</taxon>
        <taxon>Sinorhizobium/Ensifer group</taxon>
        <taxon>Sinorhizobium</taxon>
    </lineage>
</organism>
<comment type="function">
    <text evidence="1">Plays a role in the flagellum-specific transport system.</text>
</comment>
<comment type="subcellular location">
    <subcellularLocation>
        <location evidence="3">Cell membrane</location>
        <topology evidence="3">Multi-pass membrane protein</topology>
    </subcellularLocation>
    <subcellularLocation>
        <location evidence="1">Bacterial flagellum basal body</location>
    </subcellularLocation>
</comment>
<comment type="similarity">
    <text evidence="3">Belongs to the FliP/MopC/SpaP family.</text>
</comment>
<comment type="sequence caution" evidence="3">
    <conflict type="frameshift">
        <sequence resource="EMBL" id="M24526"/>
    </conflict>
</comment>
<evidence type="ECO:0000250" key="1"/>
<evidence type="ECO:0000255" key="2"/>
<evidence type="ECO:0000305" key="3"/>
<sequence length="245" mass="27209">MLRFATFIIAMMAMSGIAGAQSFPADILNTPVDGSVASWIIRTFGLLTVLSVAPGILIMVTSFPRFVIAFAILRSGMGLATTPSNMIMVSLALFMTFYVMAPTFDRAWRDGIDPLLKNEISETDAMQRMSEPFREFMVANTRDKDLQLFIDIAREKGQTVVVDEKVDLRAVVPAFMISEIRRGFEIGFLIMLPFLVIDLIVATITMAMGMMMLPPTAISLPFKILFFVLIDGWNLLVGSLVRSFI</sequence>
<keyword id="KW-0975">Bacterial flagellum</keyword>
<keyword id="KW-1005">Bacterial flagellum biogenesis</keyword>
<keyword id="KW-1006">Bacterial flagellum protein export</keyword>
<keyword id="KW-1003">Cell membrane</keyword>
<keyword id="KW-0472">Membrane</keyword>
<keyword id="KW-0653">Protein transport</keyword>
<keyword id="KW-1185">Reference proteome</keyword>
<keyword id="KW-0812">Transmembrane</keyword>
<keyword id="KW-1133">Transmembrane helix</keyword>
<keyword id="KW-0813">Transport</keyword>
<accession>P37827</accession>
<accession>Q52876</accession>
<proteinExistence type="inferred from homology"/>